<feature type="chain" id="PRO_0000436158" description="L-prolyl-[peptidyl-carrier protein] dehydrogenase">
    <location>
        <begin position="1"/>
        <end position="386"/>
    </location>
</feature>
<feature type="active site" description="Proton acceptor" evidence="1">
    <location>
        <position position="244"/>
    </location>
</feature>
<feature type="binding site" evidence="1">
    <location>
        <begin position="125"/>
        <end position="134"/>
    </location>
    <ligand>
        <name>FAD</name>
        <dbReference type="ChEBI" id="CHEBI:57692"/>
    </ligand>
</feature>
<feature type="binding site" evidence="1">
    <location>
        <begin position="158"/>
        <end position="160"/>
    </location>
    <ligand>
        <name>FAD</name>
        <dbReference type="ChEBI" id="CHEBI:57692"/>
    </ligand>
</feature>
<feature type="binding site" evidence="1">
    <location>
        <position position="270"/>
    </location>
    <ligand>
        <name>FAD</name>
        <dbReference type="ChEBI" id="CHEBI:57692"/>
    </ligand>
</feature>
<feature type="binding site" evidence="1">
    <location>
        <position position="281"/>
    </location>
    <ligand>
        <name>FAD</name>
        <dbReference type="ChEBI" id="CHEBI:57692"/>
    </ligand>
</feature>
<feature type="binding site" evidence="1">
    <location>
        <begin position="338"/>
        <end position="342"/>
    </location>
    <ligand>
        <name>FAD</name>
        <dbReference type="ChEBI" id="CHEBI:57692"/>
    </ligand>
</feature>
<feature type="binding site" evidence="1">
    <location>
        <begin position="367"/>
        <end position="369"/>
    </location>
    <ligand>
        <name>FAD</name>
        <dbReference type="ChEBI" id="CHEBI:57692"/>
    </ligand>
</feature>
<feature type="helix" evidence="10">
    <location>
        <begin position="7"/>
        <end position="22"/>
    </location>
</feature>
<feature type="helix" evidence="10">
    <location>
        <begin position="28"/>
        <end position="34"/>
    </location>
</feature>
<feature type="helix" evidence="10">
    <location>
        <begin position="39"/>
        <end position="48"/>
    </location>
</feature>
<feature type="turn" evidence="10">
    <location>
        <begin position="49"/>
        <end position="54"/>
    </location>
</feature>
<feature type="helix" evidence="10">
    <location>
        <begin position="57"/>
        <end position="59"/>
    </location>
</feature>
<feature type="helix" evidence="10">
    <location>
        <begin position="66"/>
        <end position="79"/>
    </location>
</feature>
<feature type="helix" evidence="10">
    <location>
        <begin position="83"/>
        <end position="95"/>
    </location>
</feature>
<feature type="helix" evidence="10">
    <location>
        <begin position="97"/>
        <end position="103"/>
    </location>
</feature>
<feature type="helix" evidence="10">
    <location>
        <begin position="106"/>
        <end position="117"/>
    </location>
</feature>
<feature type="strand" evidence="10">
    <location>
        <begin position="123"/>
        <end position="126"/>
    </location>
</feature>
<feature type="strand" evidence="10">
    <location>
        <begin position="132"/>
        <end position="135"/>
    </location>
</feature>
<feature type="helix" evidence="10">
    <location>
        <begin position="136"/>
        <end position="138"/>
    </location>
</feature>
<feature type="strand" evidence="10">
    <location>
        <begin position="142"/>
        <end position="146"/>
    </location>
</feature>
<feature type="strand" evidence="10">
    <location>
        <begin position="149"/>
        <end position="160"/>
    </location>
</feature>
<feature type="helix" evidence="10">
    <location>
        <begin position="162"/>
        <end position="164"/>
    </location>
</feature>
<feature type="strand" evidence="10">
    <location>
        <begin position="166"/>
        <end position="174"/>
    </location>
</feature>
<feature type="helix" evidence="10">
    <location>
        <begin position="180"/>
        <end position="182"/>
    </location>
</feature>
<feature type="strand" evidence="10">
    <location>
        <begin position="183"/>
        <end position="189"/>
    </location>
</feature>
<feature type="strand" evidence="10">
    <location>
        <begin position="195"/>
        <end position="197"/>
    </location>
</feature>
<feature type="turn" evidence="10">
    <location>
        <begin position="205"/>
        <end position="208"/>
    </location>
</feature>
<feature type="strand" evidence="10">
    <location>
        <begin position="211"/>
        <end position="222"/>
    </location>
</feature>
<feature type="helix" evidence="10">
    <location>
        <begin position="223"/>
        <end position="225"/>
    </location>
</feature>
<feature type="strand" evidence="10">
    <location>
        <begin position="226"/>
        <end position="229"/>
    </location>
</feature>
<feature type="helix" evidence="10">
    <location>
        <begin position="233"/>
        <end position="247"/>
    </location>
</feature>
<feature type="helix" evidence="10">
    <location>
        <begin position="250"/>
        <end position="269"/>
    </location>
</feature>
<feature type="helix" evidence="10">
    <location>
        <begin position="277"/>
        <end position="279"/>
    </location>
</feature>
<feature type="helix" evidence="10">
    <location>
        <begin position="281"/>
        <end position="309"/>
    </location>
</feature>
<feature type="helix" evidence="10">
    <location>
        <begin position="315"/>
        <end position="340"/>
    </location>
</feature>
<feature type="helix" evidence="10">
    <location>
        <begin position="341"/>
        <end position="345"/>
    </location>
</feature>
<feature type="turn" evidence="10">
    <location>
        <begin position="347"/>
        <end position="349"/>
    </location>
</feature>
<feature type="helix" evidence="10">
    <location>
        <begin position="351"/>
        <end position="358"/>
    </location>
</feature>
<feature type="helix" evidence="10">
    <location>
        <begin position="359"/>
        <end position="362"/>
    </location>
</feature>
<feature type="turn" evidence="10">
    <location>
        <begin position="363"/>
        <end position="365"/>
    </location>
</feature>
<feature type="helix" evidence="10">
    <location>
        <begin position="368"/>
        <end position="378"/>
    </location>
</feature>
<feature type="turn" evidence="10">
    <location>
        <begin position="379"/>
        <end position="382"/>
    </location>
</feature>
<sequence>MDFNLSNSQSDIYESAYRFACDVLDQDAQTRISQKILSTELWKKAAAYGFAHGPVSHQFGGSELGALDTALMIEALGKGSRDIGLSFSLCAHLCACVIPLYRFGSSELKDKYLESLVTGKLIAANAATEPDAGSDIYNMQATAQPCEGGYILNGKKIFITNAPIADVFIIYAKTNPDHGFLGVSAFLIEKGTPGLNVGEVIPKDCLSNCPWSEIVFNDIFIPQSQRIGMEGAGGAIFHDSMIWEKGCLSALFVGGLARLLETTLEYAKARQQFGKAIGQFQSVSNRIIDMKLRLEQCRLMLYRACWKHDQGQDAEADIAMSKLLISEYAVQSGLDAIQTFGGAAMDQELGLVRHLLNMIPSRIFSGTNDIQKEIIARKLGLRGTSS</sequence>
<organism>
    <name type="scientific">Serratia sp. (strain ATCC 39006)</name>
    <name type="common">Prodigiosinella confusarubida</name>
    <dbReference type="NCBI Taxonomy" id="104623"/>
    <lineage>
        <taxon>Bacteria</taxon>
        <taxon>Pseudomonadati</taxon>
        <taxon>Pseudomonadota</taxon>
        <taxon>Gammaproteobacteria</taxon>
        <taxon>Enterobacterales</taxon>
        <taxon>Pectobacteriaceae</taxon>
        <taxon>Prodigiosinella</taxon>
    </lineage>
</organism>
<name>PIGA_SERS3</name>
<evidence type="ECO:0000250" key="1">
    <source>
        <dbReference type="UniProtKB" id="P26440"/>
    </source>
</evidence>
<evidence type="ECO:0000269" key="2">
    <source>
    </source>
</evidence>
<evidence type="ECO:0000269" key="3">
    <source>
    </source>
</evidence>
<evidence type="ECO:0000303" key="4">
    <source>
    </source>
</evidence>
<evidence type="ECO:0000303" key="5">
    <source>
    </source>
</evidence>
<evidence type="ECO:0000303" key="6">
    <source>
    </source>
</evidence>
<evidence type="ECO:0000305" key="7"/>
<evidence type="ECO:0000305" key="8">
    <source>
    </source>
</evidence>
<evidence type="ECO:0000305" key="9">
    <source>
    </source>
</evidence>
<evidence type="ECO:0007829" key="10">
    <source>
        <dbReference type="PDB" id="5ZW7"/>
    </source>
</evidence>
<gene>
    <name evidence="4" type="primary">pigA</name>
</gene>
<keyword id="KW-0002">3D-structure</keyword>
<keyword id="KW-0045">Antibiotic biosynthesis</keyword>
<keyword id="KW-0274">FAD</keyword>
<keyword id="KW-0285">Flavoprotein</keyword>
<keyword id="KW-0560">Oxidoreductase</keyword>
<proteinExistence type="evidence at protein level"/>
<protein>
    <recommendedName>
        <fullName evidence="7">L-prolyl-[peptidyl-carrier protein] dehydrogenase</fullName>
        <ecNumber evidence="8">1.3.8.14</ecNumber>
    </recommendedName>
    <alternativeName>
        <fullName evidence="6">Flavoprotein desaturase PigA</fullName>
    </alternativeName>
    <alternativeName>
        <fullName evidence="5">L-prolyl-PCP dehydrogenase</fullName>
    </alternativeName>
</protein>
<accession>Q5W271</accession>
<comment type="function">
    <text evidence="2 3">Involved in the biosynthesis of 4-methoxy-2,2'-bipyrrole-5-carbaldehyde (MBC), one of the terminal products involved in the biosynthesis of the red antibiotic prodigiosin (Pig). Catalyzes the desaturation of the L-prolyl-[PigG] to yield 1H-pyrrole-2-carbonyl-[PigG].</text>
</comment>
<comment type="catalytic activity">
    <reaction evidence="8">
        <text>L-prolyl-[peptidyl-carrier protein] + 2 oxidized [electron-transfer flavoprotein] + H(+) = (1H-pyrrole-2-carbonyl)-[peptidyl-carrier protein] + 2 reduced [electron-transfer flavoprotein]</text>
        <dbReference type="Rhea" id="RHEA:55152"/>
        <dbReference type="Rhea" id="RHEA-COMP:10685"/>
        <dbReference type="Rhea" id="RHEA-COMP:10686"/>
        <dbReference type="Rhea" id="RHEA-COMP:14109"/>
        <dbReference type="Rhea" id="RHEA-COMP:14110"/>
        <dbReference type="ChEBI" id="CHEBI:15378"/>
        <dbReference type="ChEBI" id="CHEBI:57692"/>
        <dbReference type="ChEBI" id="CHEBI:58307"/>
        <dbReference type="ChEBI" id="CHEBI:138622"/>
        <dbReference type="ChEBI" id="CHEBI:138623"/>
        <dbReference type="EC" id="1.3.8.14"/>
    </reaction>
</comment>
<comment type="cofactor">
    <cofactor evidence="1 8">
        <name>FAD</name>
        <dbReference type="ChEBI" id="CHEBI:57692"/>
    </cofactor>
</comment>
<comment type="pathway">
    <text evidence="8 9">Antibiotic biosynthesis; prodigiosin biosynthesis.</text>
</comment>
<comment type="disruption phenotype">
    <text evidence="2">Cells lacking this gene show a white phenotype.</text>
</comment>
<comment type="similarity">
    <text evidence="7">Belongs to the acyl-CoA dehydrogenase family.</text>
</comment>
<dbReference type="EC" id="1.3.8.14" evidence="8"/>
<dbReference type="EMBL" id="AJ833001">
    <property type="protein sequence ID" value="CAH55629.1"/>
    <property type="molecule type" value="Genomic_DNA"/>
</dbReference>
<dbReference type="RefSeq" id="WP_021014639.1">
    <property type="nucleotide sequence ID" value="NZ_CP025084.1"/>
</dbReference>
<dbReference type="PDB" id="5ZW0">
    <property type="method" value="X-ray"/>
    <property type="resolution" value="2.54 A"/>
    <property type="chains" value="A/B=1-386"/>
</dbReference>
<dbReference type="PDB" id="5ZW2">
    <property type="method" value="X-ray"/>
    <property type="resolution" value="1.80 A"/>
    <property type="chains" value="A=1-386"/>
</dbReference>
<dbReference type="PDB" id="5ZW7">
    <property type="method" value="X-ray"/>
    <property type="resolution" value="1.30 A"/>
    <property type="chains" value="A=1-386"/>
</dbReference>
<dbReference type="PDB" id="5ZW8">
    <property type="method" value="X-ray"/>
    <property type="resolution" value="1.69 A"/>
    <property type="chains" value="A=1-386"/>
</dbReference>
<dbReference type="PDB" id="6AF6">
    <property type="method" value="X-ray"/>
    <property type="resolution" value="1.62 A"/>
    <property type="chains" value="A=1-386"/>
</dbReference>
<dbReference type="PDBsum" id="5ZW0"/>
<dbReference type="PDBsum" id="5ZW2"/>
<dbReference type="PDBsum" id="5ZW7"/>
<dbReference type="PDBsum" id="5ZW8"/>
<dbReference type="PDBsum" id="6AF6"/>
<dbReference type="SMR" id="Q5W271"/>
<dbReference type="STRING" id="104623.Ser39006_01369"/>
<dbReference type="KEGG" id="ag:CAH55629"/>
<dbReference type="eggNOG" id="COG1960">
    <property type="taxonomic scope" value="Bacteria"/>
</dbReference>
<dbReference type="OrthoDB" id="6138585at2"/>
<dbReference type="BRENDA" id="1.3.8.14">
    <property type="organism ID" value="5690"/>
</dbReference>
<dbReference type="UniPathway" id="UPA01072"/>
<dbReference type="GO" id="GO:0003995">
    <property type="term" value="F:acyl-CoA dehydrogenase activity"/>
    <property type="evidence" value="ECO:0007669"/>
    <property type="project" value="TreeGrafter"/>
</dbReference>
<dbReference type="GO" id="GO:0050660">
    <property type="term" value="F:flavin adenine dinucleotide binding"/>
    <property type="evidence" value="ECO:0007669"/>
    <property type="project" value="InterPro"/>
</dbReference>
<dbReference type="GO" id="GO:0017000">
    <property type="term" value="P:antibiotic biosynthetic process"/>
    <property type="evidence" value="ECO:0000315"/>
    <property type="project" value="UniProtKB"/>
</dbReference>
<dbReference type="CDD" id="cd00567">
    <property type="entry name" value="ACAD"/>
    <property type="match status" value="1"/>
</dbReference>
<dbReference type="FunFam" id="1.20.140.10:FF:000001">
    <property type="entry name" value="Acyl-CoA dehydrogenase"/>
    <property type="match status" value="1"/>
</dbReference>
<dbReference type="Gene3D" id="1.10.540.10">
    <property type="entry name" value="Acyl-CoA dehydrogenase/oxidase, N-terminal domain"/>
    <property type="match status" value="1"/>
</dbReference>
<dbReference type="Gene3D" id="2.40.110.10">
    <property type="entry name" value="Butyryl-CoA Dehydrogenase, subunit A, domain 2"/>
    <property type="match status" value="1"/>
</dbReference>
<dbReference type="Gene3D" id="1.20.140.10">
    <property type="entry name" value="Butyryl-CoA Dehydrogenase, subunit A, domain 3"/>
    <property type="match status" value="1"/>
</dbReference>
<dbReference type="InterPro" id="IPR006091">
    <property type="entry name" value="Acyl-CoA_Oxase/DH_mid-dom"/>
</dbReference>
<dbReference type="InterPro" id="IPR046373">
    <property type="entry name" value="Acyl-CoA_Oxase/DH_mid-dom_sf"/>
</dbReference>
<dbReference type="InterPro" id="IPR036250">
    <property type="entry name" value="AcylCo_DH-like_C"/>
</dbReference>
<dbReference type="InterPro" id="IPR009075">
    <property type="entry name" value="AcylCo_DH/oxidase_C"/>
</dbReference>
<dbReference type="InterPro" id="IPR013786">
    <property type="entry name" value="AcylCoA_DH/ox_N"/>
</dbReference>
<dbReference type="InterPro" id="IPR037069">
    <property type="entry name" value="AcylCoA_DH/ox_N_sf"/>
</dbReference>
<dbReference type="InterPro" id="IPR009100">
    <property type="entry name" value="AcylCoA_DH/oxidase_NM_dom_sf"/>
</dbReference>
<dbReference type="PANTHER" id="PTHR43884">
    <property type="entry name" value="ACYL-COA DEHYDROGENASE"/>
    <property type="match status" value="1"/>
</dbReference>
<dbReference type="PANTHER" id="PTHR43884:SF12">
    <property type="entry name" value="ISOVALERYL-COA DEHYDROGENASE, MITOCHONDRIAL-RELATED"/>
    <property type="match status" value="1"/>
</dbReference>
<dbReference type="Pfam" id="PF00441">
    <property type="entry name" value="Acyl-CoA_dh_1"/>
    <property type="match status" value="1"/>
</dbReference>
<dbReference type="Pfam" id="PF02770">
    <property type="entry name" value="Acyl-CoA_dh_M"/>
    <property type="match status" value="1"/>
</dbReference>
<dbReference type="Pfam" id="PF02771">
    <property type="entry name" value="Acyl-CoA_dh_N"/>
    <property type="match status" value="1"/>
</dbReference>
<dbReference type="SUPFAM" id="SSF47203">
    <property type="entry name" value="Acyl-CoA dehydrogenase C-terminal domain-like"/>
    <property type="match status" value="1"/>
</dbReference>
<dbReference type="SUPFAM" id="SSF56645">
    <property type="entry name" value="Acyl-CoA dehydrogenase NM domain-like"/>
    <property type="match status" value="1"/>
</dbReference>
<reference key="1">
    <citation type="journal article" date="2004" name="Microbiology">
        <title>The Serratia gene cluster encoding biosynthesis of the red antibiotic, prodigiosin, shows species- and strain-dependent genome context variation.</title>
        <authorList>
            <person name="Harris A.K."/>
            <person name="Williamson N.R."/>
            <person name="Slater H."/>
            <person name="Cox A."/>
            <person name="Abbasi S."/>
            <person name="Foulds I."/>
            <person name="Simonsen H.T."/>
            <person name="Leeper F.J."/>
            <person name="Salmond G.P."/>
        </authorList>
    </citation>
    <scope>NUCLEOTIDE SEQUENCE [GENOMIC DNA]</scope>
    <source>
        <strain>ATCC 39006 / SC 11482</strain>
    </source>
</reference>
<reference key="2">
    <citation type="journal article" date="2005" name="Mol. Microbiol.">
        <title>Biosynthesis of the red antibiotic, prodigiosin, in Serratia: identification of a novel 2-methyl-3-n-amyl-pyrrole (MAP) assembly pathway, definition of the terminal condensing enzyme, and implications for undecylprodigiosin biosynthesis in Streptomyces.</title>
        <authorList>
            <person name="Williamson N.R."/>
            <person name="Simonsen H.T."/>
            <person name="Ahmed R.A."/>
            <person name="Goldet G."/>
            <person name="Slater H."/>
            <person name="Woodley L."/>
            <person name="Leeper F.J."/>
            <person name="Salmond G.P."/>
        </authorList>
    </citation>
    <scope>FUNCTION</scope>
    <scope>CATALYTIC ACTIVITY</scope>
    <scope>DISRUPTION PHENOTYPE</scope>
    <scope>COFACTOR</scope>
    <scope>PATHWAY</scope>
    <source>
        <strain>ATCC 39006 / SC 11482</strain>
    </source>
</reference>
<reference key="3">
    <citation type="journal article" date="2006" name="J. Am. Chem. Soc.">
        <title>Protein assembly line components in prodigiosin biosynthesis: characterization of PigA,G,H,I,J.</title>
        <authorList>
            <person name="Garneau-Tsodikova S."/>
            <person name="Dorrestein P.C."/>
            <person name="Kelleher N.L."/>
            <person name="Walsh C.T."/>
        </authorList>
    </citation>
    <scope>FUNCTION</scope>
    <scope>PATHWAY</scope>
    <source>
        <strain>ATCC 39006 / SC 11482</strain>
    </source>
</reference>